<sequence length="718" mass="78629">MSNESKCPFSGHNSKPQVTVGGGTANLHWWPNQLRVDLLNQHSERSNPLGKDFNYRQEFKKLDYYALKADIKNVLTDSQDWWPADWGNYTGLFIRLAWHAAGTYRMGDGRGGAGRGQQRFAPLNSWPDNASLDKARRLLWPVKQKYGQKISWADLFILAGNIALESSGFRTFGFGAGREDVWEPDNDVNWGDEKEWLAHRNSEALAGSNLAATEMGLIYVNPEGPQASGDPRSAAPFIRATFGNMAMDDEEIVALIAGGHTLGKTHGAAPADHVQADPEGAPIEQMGFGWANSYGTGVGKDAITSGLEVIWSQTPTQWSNYFFENLFKYEWVQERSPAGAIQWVAADAEAIIPDPFDPSIKRKPTMLTTDLTLRFDPEFEKISRRFLNDPQAFANAFARAWFKLTHRDMGPKARYLGPEVPTEDLIWQDPLPAASATPSSASIADAKAKIVALGLPAGELVSLAWASASTFRGGDKRGGANGARIALSPQREWEVNKKAVETLTKIEELKASTQLSLADLIVLAGNVGVEQAAQAAGFNITVPFAPGRVDALQSQTDVESFQLLLGLADGFRNWKKQGVNTPAEVLLIDKAQQLTLTAPELTALIGGLRVLGTNWDGSQHGVFTQQVGVLSTDFFTNLLDMSNVWAPVDSTSEVFEGKDRKSGTVKFTATRNDLVFGSNSILRALAEVYAQADGKEKFVQDFVAAWTKVMNLDRFDLA</sequence>
<protein>
    <recommendedName>
        <fullName evidence="1">Catalase-peroxidase</fullName>
        <shortName evidence="1">CP</shortName>
        <ecNumber evidence="1">1.11.1.21</ecNumber>
    </recommendedName>
    <alternativeName>
        <fullName evidence="1">Peroxidase/catalase</fullName>
    </alternativeName>
</protein>
<accession>B7I4D5</accession>
<feature type="chain" id="PRO_1000216221" description="Catalase-peroxidase">
    <location>
        <begin position="1"/>
        <end position="718"/>
    </location>
</feature>
<feature type="active site" description="Proton acceptor" evidence="1">
    <location>
        <position position="99"/>
    </location>
</feature>
<feature type="binding site" description="axial binding residue" evidence="1">
    <location>
        <position position="260"/>
    </location>
    <ligand>
        <name>heme b</name>
        <dbReference type="ChEBI" id="CHEBI:60344"/>
    </ligand>
    <ligandPart>
        <name>Fe</name>
        <dbReference type="ChEBI" id="CHEBI:18248"/>
    </ligandPart>
</feature>
<feature type="site" description="Transition state stabilizer" evidence="1">
    <location>
        <position position="95"/>
    </location>
</feature>
<feature type="cross-link" description="Tryptophyl-tyrosyl-methioninium (Trp-Tyr) (with M-245)" evidence="1">
    <location>
        <begin position="98"/>
        <end position="219"/>
    </location>
</feature>
<feature type="cross-link" description="Tryptophyl-tyrosyl-methioninium (Tyr-Met) (with W-98)" evidence="1">
    <location>
        <begin position="219"/>
        <end position="245"/>
    </location>
</feature>
<organism>
    <name type="scientific">Acinetobacter baumannii (strain AB0057)</name>
    <dbReference type="NCBI Taxonomy" id="480119"/>
    <lineage>
        <taxon>Bacteria</taxon>
        <taxon>Pseudomonadati</taxon>
        <taxon>Pseudomonadota</taxon>
        <taxon>Gammaproteobacteria</taxon>
        <taxon>Moraxellales</taxon>
        <taxon>Moraxellaceae</taxon>
        <taxon>Acinetobacter</taxon>
        <taxon>Acinetobacter calcoaceticus/baumannii complex</taxon>
    </lineage>
</organism>
<dbReference type="EC" id="1.11.1.21" evidence="1"/>
<dbReference type="EMBL" id="CP001182">
    <property type="protein sequence ID" value="ACJ39910.1"/>
    <property type="molecule type" value="Genomic_DNA"/>
</dbReference>
<dbReference type="RefSeq" id="WP_000064284.1">
    <property type="nucleotide sequence ID" value="NC_011586.2"/>
</dbReference>
<dbReference type="SMR" id="B7I4D5"/>
<dbReference type="KEGG" id="abn:AB57_0488"/>
<dbReference type="HOGENOM" id="CLU_025424_2_0_6"/>
<dbReference type="Proteomes" id="UP000007094">
    <property type="component" value="Chromosome"/>
</dbReference>
<dbReference type="GO" id="GO:0005829">
    <property type="term" value="C:cytosol"/>
    <property type="evidence" value="ECO:0007669"/>
    <property type="project" value="TreeGrafter"/>
</dbReference>
<dbReference type="GO" id="GO:0004096">
    <property type="term" value="F:catalase activity"/>
    <property type="evidence" value="ECO:0007669"/>
    <property type="project" value="UniProtKB-UniRule"/>
</dbReference>
<dbReference type="GO" id="GO:0020037">
    <property type="term" value="F:heme binding"/>
    <property type="evidence" value="ECO:0007669"/>
    <property type="project" value="InterPro"/>
</dbReference>
<dbReference type="GO" id="GO:0046872">
    <property type="term" value="F:metal ion binding"/>
    <property type="evidence" value="ECO:0007669"/>
    <property type="project" value="UniProtKB-KW"/>
</dbReference>
<dbReference type="GO" id="GO:0070301">
    <property type="term" value="P:cellular response to hydrogen peroxide"/>
    <property type="evidence" value="ECO:0007669"/>
    <property type="project" value="TreeGrafter"/>
</dbReference>
<dbReference type="GO" id="GO:0042744">
    <property type="term" value="P:hydrogen peroxide catabolic process"/>
    <property type="evidence" value="ECO:0007669"/>
    <property type="project" value="UniProtKB-KW"/>
</dbReference>
<dbReference type="FunFam" id="1.10.420.10:FF:000002">
    <property type="entry name" value="Catalase-peroxidase"/>
    <property type="match status" value="1"/>
</dbReference>
<dbReference type="FunFam" id="1.10.420.10:FF:000004">
    <property type="entry name" value="Catalase-peroxidase"/>
    <property type="match status" value="1"/>
</dbReference>
<dbReference type="FunFam" id="1.10.520.10:FF:000002">
    <property type="entry name" value="Catalase-peroxidase"/>
    <property type="match status" value="1"/>
</dbReference>
<dbReference type="Gene3D" id="1.10.520.10">
    <property type="match status" value="2"/>
</dbReference>
<dbReference type="Gene3D" id="1.10.420.10">
    <property type="entry name" value="Peroxidase, domain 2"/>
    <property type="match status" value="2"/>
</dbReference>
<dbReference type="HAMAP" id="MF_01961">
    <property type="entry name" value="Catal_peroxid"/>
    <property type="match status" value="1"/>
</dbReference>
<dbReference type="InterPro" id="IPR000763">
    <property type="entry name" value="Catalase_peroxidase"/>
</dbReference>
<dbReference type="InterPro" id="IPR002016">
    <property type="entry name" value="Haem_peroxidase"/>
</dbReference>
<dbReference type="InterPro" id="IPR010255">
    <property type="entry name" value="Haem_peroxidase_sf"/>
</dbReference>
<dbReference type="InterPro" id="IPR019794">
    <property type="entry name" value="Peroxidases_AS"/>
</dbReference>
<dbReference type="NCBIfam" id="TIGR00198">
    <property type="entry name" value="cat_per_HPI"/>
    <property type="match status" value="1"/>
</dbReference>
<dbReference type="NCBIfam" id="NF011635">
    <property type="entry name" value="PRK15061.1"/>
    <property type="match status" value="1"/>
</dbReference>
<dbReference type="PANTHER" id="PTHR30555:SF0">
    <property type="entry name" value="CATALASE-PEROXIDASE"/>
    <property type="match status" value="1"/>
</dbReference>
<dbReference type="PANTHER" id="PTHR30555">
    <property type="entry name" value="HYDROPEROXIDASE I, BIFUNCTIONAL CATALASE-PEROXIDASE"/>
    <property type="match status" value="1"/>
</dbReference>
<dbReference type="Pfam" id="PF00141">
    <property type="entry name" value="peroxidase"/>
    <property type="match status" value="2"/>
</dbReference>
<dbReference type="PRINTS" id="PR00460">
    <property type="entry name" value="BPEROXIDASE"/>
</dbReference>
<dbReference type="PRINTS" id="PR00458">
    <property type="entry name" value="PEROXIDASE"/>
</dbReference>
<dbReference type="SUPFAM" id="SSF48113">
    <property type="entry name" value="Heme-dependent peroxidases"/>
    <property type="match status" value="2"/>
</dbReference>
<dbReference type="PROSITE" id="PS00436">
    <property type="entry name" value="PEROXIDASE_2"/>
    <property type="match status" value="1"/>
</dbReference>
<dbReference type="PROSITE" id="PS50873">
    <property type="entry name" value="PEROXIDASE_4"/>
    <property type="match status" value="1"/>
</dbReference>
<keyword id="KW-0349">Heme</keyword>
<keyword id="KW-0376">Hydrogen peroxide</keyword>
<keyword id="KW-0408">Iron</keyword>
<keyword id="KW-0479">Metal-binding</keyword>
<keyword id="KW-0560">Oxidoreductase</keyword>
<keyword id="KW-0575">Peroxidase</keyword>
<name>KATG_ACIB5</name>
<gene>
    <name evidence="1" type="primary">katG</name>
    <name type="ordered locus">AB57_0488</name>
</gene>
<evidence type="ECO:0000255" key="1">
    <source>
        <dbReference type="HAMAP-Rule" id="MF_01961"/>
    </source>
</evidence>
<comment type="function">
    <text evidence="1">Bifunctional enzyme with both catalase and broad-spectrum peroxidase activity.</text>
</comment>
<comment type="catalytic activity">
    <reaction evidence="1">
        <text>H2O2 + AH2 = A + 2 H2O</text>
        <dbReference type="Rhea" id="RHEA:30275"/>
        <dbReference type="ChEBI" id="CHEBI:13193"/>
        <dbReference type="ChEBI" id="CHEBI:15377"/>
        <dbReference type="ChEBI" id="CHEBI:16240"/>
        <dbReference type="ChEBI" id="CHEBI:17499"/>
        <dbReference type="EC" id="1.11.1.21"/>
    </reaction>
</comment>
<comment type="catalytic activity">
    <reaction evidence="1">
        <text>2 H2O2 = O2 + 2 H2O</text>
        <dbReference type="Rhea" id="RHEA:20309"/>
        <dbReference type="ChEBI" id="CHEBI:15377"/>
        <dbReference type="ChEBI" id="CHEBI:15379"/>
        <dbReference type="ChEBI" id="CHEBI:16240"/>
        <dbReference type="EC" id="1.11.1.21"/>
    </reaction>
</comment>
<comment type="cofactor">
    <cofactor evidence="1">
        <name>heme b</name>
        <dbReference type="ChEBI" id="CHEBI:60344"/>
    </cofactor>
    <text evidence="1">Binds 1 heme b (iron(II)-protoporphyrin IX) group per dimer.</text>
</comment>
<comment type="subunit">
    <text evidence="1">Homodimer or homotetramer.</text>
</comment>
<comment type="PTM">
    <text evidence="1">Formation of the three residue Trp-Tyr-Met cross-link is important for the catalase, but not the peroxidase activity of the enzyme.</text>
</comment>
<comment type="similarity">
    <text evidence="1">Belongs to the peroxidase family. Peroxidase/catalase subfamily.</text>
</comment>
<reference key="1">
    <citation type="journal article" date="2008" name="J. Bacteriol.">
        <title>Comparative genome sequence analysis of multidrug-resistant Acinetobacter baumannii.</title>
        <authorList>
            <person name="Adams M.D."/>
            <person name="Goglin K."/>
            <person name="Molyneaux N."/>
            <person name="Hujer K.M."/>
            <person name="Lavender H."/>
            <person name="Jamison J.J."/>
            <person name="MacDonald I.J."/>
            <person name="Martin K.M."/>
            <person name="Russo T."/>
            <person name="Campagnari A.A."/>
            <person name="Hujer A.M."/>
            <person name="Bonomo R.A."/>
            <person name="Gill S.R."/>
        </authorList>
    </citation>
    <scope>NUCLEOTIDE SEQUENCE [LARGE SCALE GENOMIC DNA]</scope>
    <source>
        <strain>AB0057</strain>
    </source>
</reference>
<proteinExistence type="inferred from homology"/>